<dbReference type="EMBL" id="BC072101">
    <property type="protein sequence ID" value="AAH72101.1"/>
    <property type="molecule type" value="mRNA"/>
</dbReference>
<dbReference type="RefSeq" id="NP_001085393.1">
    <property type="nucleotide sequence ID" value="NM_001091924.1"/>
</dbReference>
<dbReference type="SMR" id="Q6IP18"/>
<dbReference type="BioGRID" id="101982">
    <property type="interactions" value="1"/>
</dbReference>
<dbReference type="DNASU" id="443819"/>
<dbReference type="GeneID" id="443819"/>
<dbReference type="KEGG" id="xla:443819"/>
<dbReference type="AGR" id="Xenbase:XB-GENE-865703"/>
<dbReference type="CTD" id="443819"/>
<dbReference type="Xenbase" id="XB-GENE-865703">
    <property type="gene designation" value="rpa2.L"/>
</dbReference>
<dbReference type="OMA" id="SFGNKRY"/>
<dbReference type="OrthoDB" id="25571at2759"/>
<dbReference type="CD-CODE" id="78E86D56">
    <property type="entry name" value="Mitochondrial cloud"/>
</dbReference>
<dbReference type="Proteomes" id="UP000186698">
    <property type="component" value="Chromosome 2L"/>
</dbReference>
<dbReference type="Bgee" id="443819">
    <property type="expression patterns" value="Expressed in blastula and 19 other cell types or tissues"/>
</dbReference>
<dbReference type="GO" id="GO:0000785">
    <property type="term" value="C:chromatin"/>
    <property type="evidence" value="ECO:0000314"/>
    <property type="project" value="UniProtKB"/>
</dbReference>
<dbReference type="GO" id="GO:0000781">
    <property type="term" value="C:chromosome, telomeric region"/>
    <property type="evidence" value="ECO:0000318"/>
    <property type="project" value="GO_Central"/>
</dbReference>
<dbReference type="GO" id="GO:0005662">
    <property type="term" value="C:DNA replication factor A complex"/>
    <property type="evidence" value="ECO:0000250"/>
    <property type="project" value="UniProtKB"/>
</dbReference>
<dbReference type="GO" id="GO:0005634">
    <property type="term" value="C:nucleus"/>
    <property type="evidence" value="ECO:0000250"/>
    <property type="project" value="UniProtKB"/>
</dbReference>
<dbReference type="GO" id="GO:0016605">
    <property type="term" value="C:PML body"/>
    <property type="evidence" value="ECO:0000250"/>
    <property type="project" value="UniProtKB"/>
</dbReference>
<dbReference type="GO" id="GO:0035861">
    <property type="term" value="C:site of double-strand break"/>
    <property type="evidence" value="ECO:0000318"/>
    <property type="project" value="GO_Central"/>
</dbReference>
<dbReference type="GO" id="GO:0003684">
    <property type="term" value="F:damaged DNA binding"/>
    <property type="evidence" value="ECO:0000250"/>
    <property type="project" value="UniProtKB"/>
</dbReference>
<dbReference type="GO" id="GO:0003697">
    <property type="term" value="F:single-stranded DNA binding"/>
    <property type="evidence" value="ECO:0000250"/>
    <property type="project" value="UniProtKB"/>
</dbReference>
<dbReference type="GO" id="GO:0042162">
    <property type="term" value="F:telomeric DNA binding"/>
    <property type="evidence" value="ECO:0000318"/>
    <property type="project" value="GO_Central"/>
</dbReference>
<dbReference type="GO" id="GO:0006284">
    <property type="term" value="P:base-excision repair"/>
    <property type="evidence" value="ECO:0000250"/>
    <property type="project" value="UniProtKB"/>
</dbReference>
<dbReference type="GO" id="GO:0006260">
    <property type="term" value="P:DNA replication"/>
    <property type="evidence" value="ECO:0000250"/>
    <property type="project" value="UniProtKB"/>
</dbReference>
<dbReference type="GO" id="GO:0000076">
    <property type="term" value="P:DNA replication checkpoint signaling"/>
    <property type="evidence" value="ECO:0000315"/>
    <property type="project" value="UniProtKB"/>
</dbReference>
<dbReference type="GO" id="GO:0000724">
    <property type="term" value="P:double-strand break repair via homologous recombination"/>
    <property type="evidence" value="ECO:0000250"/>
    <property type="project" value="UniProtKB"/>
</dbReference>
<dbReference type="GO" id="GO:0006298">
    <property type="term" value="P:mismatch repair"/>
    <property type="evidence" value="ECO:0000250"/>
    <property type="project" value="UniProtKB"/>
</dbReference>
<dbReference type="GO" id="GO:0006289">
    <property type="term" value="P:nucleotide-excision repair"/>
    <property type="evidence" value="ECO:0000250"/>
    <property type="project" value="UniProtKB"/>
</dbReference>
<dbReference type="GO" id="GO:0034502">
    <property type="term" value="P:protein localization to chromosome"/>
    <property type="evidence" value="ECO:0000250"/>
    <property type="project" value="UniProtKB"/>
</dbReference>
<dbReference type="GO" id="GO:0000723">
    <property type="term" value="P:telomere maintenance"/>
    <property type="evidence" value="ECO:0000250"/>
    <property type="project" value="UniProtKB"/>
</dbReference>
<dbReference type="CDD" id="cd04478">
    <property type="entry name" value="RPA2_DBD_D"/>
    <property type="match status" value="1"/>
</dbReference>
<dbReference type="FunFam" id="1.10.10.10:FF:000168">
    <property type="entry name" value="Replication protein A 32 kDa subunit"/>
    <property type="match status" value="1"/>
</dbReference>
<dbReference type="FunFam" id="2.40.50.140:FF:000149">
    <property type="entry name" value="Replication protein A 32 kDa subunit"/>
    <property type="match status" value="1"/>
</dbReference>
<dbReference type="Gene3D" id="2.40.50.140">
    <property type="entry name" value="Nucleic acid-binding proteins"/>
    <property type="match status" value="1"/>
</dbReference>
<dbReference type="Gene3D" id="1.10.10.10">
    <property type="entry name" value="Winged helix-like DNA-binding domain superfamily/Winged helix DNA-binding domain"/>
    <property type="match status" value="1"/>
</dbReference>
<dbReference type="InterPro" id="IPR012340">
    <property type="entry name" value="NA-bd_OB-fold"/>
</dbReference>
<dbReference type="InterPro" id="IPR040260">
    <property type="entry name" value="RFA2-like"/>
</dbReference>
<dbReference type="InterPro" id="IPR014646">
    <property type="entry name" value="Rfa2/RPA32"/>
</dbReference>
<dbReference type="InterPro" id="IPR014892">
    <property type="entry name" value="RPA_C"/>
</dbReference>
<dbReference type="InterPro" id="IPR036388">
    <property type="entry name" value="WH-like_DNA-bd_sf"/>
</dbReference>
<dbReference type="InterPro" id="IPR036390">
    <property type="entry name" value="WH_DNA-bd_sf"/>
</dbReference>
<dbReference type="PANTHER" id="PTHR13989">
    <property type="entry name" value="REPLICATION PROTEIN A-RELATED"/>
    <property type="match status" value="1"/>
</dbReference>
<dbReference type="PANTHER" id="PTHR13989:SF16">
    <property type="entry name" value="REPLICATION PROTEIN A2"/>
    <property type="match status" value="1"/>
</dbReference>
<dbReference type="Pfam" id="PF08784">
    <property type="entry name" value="RPA_C"/>
    <property type="match status" value="1"/>
</dbReference>
<dbReference type="PIRSF" id="PIRSF036949">
    <property type="entry name" value="RPA32"/>
    <property type="match status" value="1"/>
</dbReference>
<dbReference type="SUPFAM" id="SSF50249">
    <property type="entry name" value="Nucleic acid-binding proteins"/>
    <property type="match status" value="1"/>
</dbReference>
<dbReference type="SUPFAM" id="SSF46785">
    <property type="entry name" value="Winged helix' DNA-binding domain"/>
    <property type="match status" value="1"/>
</dbReference>
<reference key="1">
    <citation type="submission" date="2004-06" db="EMBL/GenBank/DDBJ databases">
        <authorList>
            <consortium name="NIH - Xenopus Gene Collection (XGC) project"/>
        </authorList>
    </citation>
    <scope>NUCLEOTIDE SEQUENCE [LARGE SCALE MRNA]</scope>
    <source>
        <tissue>Heart</tissue>
    </source>
</reference>
<reference key="2">
    <citation type="journal article" date="2012" name="Biochem. Biophys. Res. Commun.">
        <title>Implication of RPA32 phosphorylation in S-phase checkpoint signalling at replication forks stalled with aphidicolin in Xenopus egg extracts.</title>
        <authorList>
            <person name="Recolin B."/>
            <person name="Maiorano D."/>
        </authorList>
    </citation>
    <scope>FUNCTION IN REPLICATION CHECKPOINT ACTIVATION</scope>
    <scope>MUTAGENESIS OF SER-26; SER-32 AND THR-36</scope>
    <scope>SUBCELLULAR LOCATION</scope>
    <scope>PHOSPHORYLATION</scope>
</reference>
<gene>
    <name type="primary">rpa2-a</name>
    <name type="synonym">repa2</name>
    <name type="synonym">rpa2</name>
    <name type="synonym">rpa32</name>
    <name type="synonym">rpa34</name>
</gene>
<organism>
    <name type="scientific">Xenopus laevis</name>
    <name type="common">African clawed frog</name>
    <dbReference type="NCBI Taxonomy" id="8355"/>
    <lineage>
        <taxon>Eukaryota</taxon>
        <taxon>Metazoa</taxon>
        <taxon>Chordata</taxon>
        <taxon>Craniata</taxon>
        <taxon>Vertebrata</taxon>
        <taxon>Euteleostomi</taxon>
        <taxon>Amphibia</taxon>
        <taxon>Batrachia</taxon>
        <taxon>Anura</taxon>
        <taxon>Pipoidea</taxon>
        <taxon>Pipidae</taxon>
        <taxon>Xenopodinae</taxon>
        <taxon>Xenopus</taxon>
        <taxon>Xenopus</taxon>
    </lineage>
</organism>
<comment type="function">
    <text evidence="3">As part of the heterotrimeric replication protein A complex (RPA/RP-A), binds and stabilizes single-stranded DNA intermediates, that form during DNA replication or upon DNA stress. It prevents their reannealing and in parallel, recruits and activates different proteins and complexes involved in DNA metabolism. Thereby, it plays an essential role both in DNA replication and the cellular response to DNA damage.</text>
</comment>
<comment type="subunit">
    <text evidence="1">Component of the replication protein A complex (RPA/RP-A), a heterotrimeric complex composed of RPA1, RPA2 and RPA3.</text>
</comment>
<comment type="subcellular location">
    <subcellularLocation>
        <location evidence="3">Nucleus</location>
    </subcellularLocation>
    <subcellularLocation>
        <location evidence="1">Nucleus</location>
        <location evidence="1">PML body</location>
    </subcellularLocation>
    <text evidence="1">Redistributes to discrete nuclear foci upon DNA damage in an ATR-dependent manner.</text>
</comment>
<comment type="PTM">
    <text evidence="3">Differentially phosphorylated throughout the cell cycle, becoming phosphorylated at the G1-S transition and dephosphorylated in late mitosis. Phosphorylation increases upon replication fork stalling.</text>
</comment>
<comment type="similarity">
    <text evidence="4">Belongs to the replication factor A protein 2 family.</text>
</comment>
<sequence>MWNNHGGFDGGYGGSGMGGGGGYMQSPGGFGSPAPTQGEKKSRSRSQQIVPCTVSQLLSATQNDEVFRIGEAELSQVTIVGIVRHAEKAPTNILYKVDDMTAAPMDVRQWVDTDEASCENMVVPPGSYVKVAGHLRSFQNKKSVVAFKIAPVEDMNEFVSHMLEVVHAHMAMNSQGAPSGGGSTVALSTPGRVGDSGRAFSGGNDNPTNGLTPHQSQILSLIKSCKGNEGMAFEELKNRLHGMNVNTIRQAVEFLSNEGHIYSTIDDEHYKCTDGD</sequence>
<accession>Q6IP18</accession>
<proteinExistence type="evidence at protein level"/>
<name>RFA2A_XENLA</name>
<evidence type="ECO:0000250" key="1"/>
<evidence type="ECO:0000256" key="2">
    <source>
        <dbReference type="SAM" id="MobiDB-lite"/>
    </source>
</evidence>
<evidence type="ECO:0000269" key="3">
    <source>
    </source>
</evidence>
<evidence type="ECO:0000305" key="4"/>
<feature type="chain" id="PRO_0000429834" description="Replication protein A 32 kDa subunit-A">
    <location>
        <begin position="1"/>
        <end position="276"/>
    </location>
</feature>
<feature type="DNA-binding region" description="OB">
    <location>
        <begin position="77"/>
        <end position="151"/>
    </location>
</feature>
<feature type="region of interest" description="Disordered" evidence="2">
    <location>
        <begin position="19"/>
        <end position="47"/>
    </location>
</feature>
<feature type="compositionally biased region" description="Gly residues" evidence="2">
    <location>
        <begin position="19"/>
        <end position="31"/>
    </location>
</feature>
<feature type="mutagenesis site" description="Not phosphorylated but normally recruited to chromatin and able to stimulate replication checkpoint signaling upon replication fork stalling; when associated with A-32 and A-36." evidence="3">
    <original>S</original>
    <variation>A</variation>
    <location>
        <position position="26"/>
    </location>
</feature>
<feature type="mutagenesis site" description="Not phosphorylated but normally recruited to chromatin and able to stimulate replication checkpoint signaling upon replication fork stalling; when associated with A-26 and A-36." evidence="3">
    <original>S</original>
    <variation>A</variation>
    <location>
        <position position="32"/>
    </location>
</feature>
<feature type="mutagenesis site" description="Not phosphorylated but normally recruited to chromatin and able to stimulate replication checkpoint signaling upon replication fork stalling; when associated with A-26 and A-32." evidence="3">
    <original>T</original>
    <variation>A</variation>
    <location>
        <position position="36"/>
    </location>
</feature>
<protein>
    <recommendedName>
        <fullName>Replication protein A 32 kDa subunit-A</fullName>
        <shortName>RP-A p32</shortName>
    </recommendedName>
    <alternativeName>
        <fullName>Replication factor A protein 2</fullName>
        <shortName>RF-A protein 2</shortName>
    </alternativeName>
    <alternativeName>
        <fullName>Replication protein A 34 kDa subunit</fullName>
        <shortName>RP-A p34</shortName>
    </alternativeName>
</protein>
<keyword id="KW-0227">DNA damage</keyword>
<keyword id="KW-0233">DNA recombination</keyword>
<keyword id="KW-0234">DNA repair</keyword>
<keyword id="KW-0235">DNA replication</keyword>
<keyword id="KW-0238">DNA-binding</keyword>
<keyword id="KW-0539">Nucleus</keyword>
<keyword id="KW-0597">Phosphoprotein</keyword>
<keyword id="KW-1185">Reference proteome</keyword>